<sequence length="86" mass="10025">MERKQRRTLVGRVVSDKMDKTITVVVETKRNHPVYGKRINYSKKYKAHDENNIAKAGDIVRIMETRPLSATKRFRLVEVVEEAVII</sequence>
<organism>
    <name type="scientific">Streptococcus mutans serotype c (strain ATCC 700610 / UA159)</name>
    <dbReference type="NCBI Taxonomy" id="210007"/>
    <lineage>
        <taxon>Bacteria</taxon>
        <taxon>Bacillati</taxon>
        <taxon>Bacillota</taxon>
        <taxon>Bacilli</taxon>
        <taxon>Lactobacillales</taxon>
        <taxon>Streptococcaceae</taxon>
        <taxon>Streptococcus</taxon>
    </lineage>
</organism>
<gene>
    <name evidence="1" type="primary">rpsQ</name>
    <name type="ordered locus">SMU_2018</name>
</gene>
<keyword id="KW-1185">Reference proteome</keyword>
<keyword id="KW-0687">Ribonucleoprotein</keyword>
<keyword id="KW-0689">Ribosomal protein</keyword>
<keyword id="KW-0694">RNA-binding</keyword>
<keyword id="KW-0699">rRNA-binding</keyword>
<accession>Q8DS22</accession>
<comment type="function">
    <text evidence="1">One of the primary rRNA binding proteins, it binds specifically to the 5'-end of 16S ribosomal RNA.</text>
</comment>
<comment type="subunit">
    <text evidence="1">Part of the 30S ribosomal subunit.</text>
</comment>
<comment type="similarity">
    <text evidence="1">Belongs to the universal ribosomal protein uS17 family.</text>
</comment>
<feature type="chain" id="PRO_0000233575" description="Small ribosomal subunit protein uS17">
    <location>
        <begin position="1"/>
        <end position="86"/>
    </location>
</feature>
<reference key="1">
    <citation type="journal article" date="2002" name="Proc. Natl. Acad. Sci. U.S.A.">
        <title>Genome sequence of Streptococcus mutans UA159, a cariogenic dental pathogen.</title>
        <authorList>
            <person name="Ajdic D.J."/>
            <person name="McShan W.M."/>
            <person name="McLaughlin R.E."/>
            <person name="Savic G."/>
            <person name="Chang J."/>
            <person name="Carson M.B."/>
            <person name="Primeaux C."/>
            <person name="Tian R."/>
            <person name="Kenton S."/>
            <person name="Jia H.G."/>
            <person name="Lin S.P."/>
            <person name="Qian Y."/>
            <person name="Li S."/>
            <person name="Zhu H."/>
            <person name="Najar F.Z."/>
            <person name="Lai H."/>
            <person name="White J."/>
            <person name="Roe B.A."/>
            <person name="Ferretti J.J."/>
        </authorList>
    </citation>
    <scope>NUCLEOTIDE SEQUENCE [LARGE SCALE GENOMIC DNA]</scope>
    <source>
        <strain>ATCC 700610 / UA159</strain>
    </source>
</reference>
<protein>
    <recommendedName>
        <fullName evidence="1">Small ribosomal subunit protein uS17</fullName>
    </recommendedName>
    <alternativeName>
        <fullName evidence="2">30S ribosomal protein S17</fullName>
    </alternativeName>
</protein>
<proteinExistence type="inferred from homology"/>
<name>RS17_STRMU</name>
<dbReference type="EMBL" id="AE014133">
    <property type="protein sequence ID" value="AAN59621.1"/>
    <property type="molecule type" value="Genomic_DNA"/>
</dbReference>
<dbReference type="RefSeq" id="NP_722315.1">
    <property type="nucleotide sequence ID" value="NC_004350.2"/>
</dbReference>
<dbReference type="RefSeq" id="WP_002262331.1">
    <property type="nucleotide sequence ID" value="NC_004350.2"/>
</dbReference>
<dbReference type="SMR" id="Q8DS22"/>
<dbReference type="STRING" id="210007.SMU_2018"/>
<dbReference type="KEGG" id="smu:SMU_2018"/>
<dbReference type="PATRIC" id="fig|210007.7.peg.1798"/>
<dbReference type="eggNOG" id="COG0186">
    <property type="taxonomic scope" value="Bacteria"/>
</dbReference>
<dbReference type="HOGENOM" id="CLU_073626_1_0_9"/>
<dbReference type="OrthoDB" id="9811714at2"/>
<dbReference type="PhylomeDB" id="Q8DS22"/>
<dbReference type="Proteomes" id="UP000002512">
    <property type="component" value="Chromosome"/>
</dbReference>
<dbReference type="GO" id="GO:0022627">
    <property type="term" value="C:cytosolic small ribosomal subunit"/>
    <property type="evidence" value="ECO:0007669"/>
    <property type="project" value="TreeGrafter"/>
</dbReference>
<dbReference type="GO" id="GO:0019843">
    <property type="term" value="F:rRNA binding"/>
    <property type="evidence" value="ECO:0007669"/>
    <property type="project" value="UniProtKB-UniRule"/>
</dbReference>
<dbReference type="GO" id="GO:0003735">
    <property type="term" value="F:structural constituent of ribosome"/>
    <property type="evidence" value="ECO:0007669"/>
    <property type="project" value="InterPro"/>
</dbReference>
<dbReference type="GO" id="GO:0006412">
    <property type="term" value="P:translation"/>
    <property type="evidence" value="ECO:0007669"/>
    <property type="project" value="UniProtKB-UniRule"/>
</dbReference>
<dbReference type="CDD" id="cd00364">
    <property type="entry name" value="Ribosomal_uS17"/>
    <property type="match status" value="1"/>
</dbReference>
<dbReference type="FunFam" id="2.40.50.140:FF:000026">
    <property type="entry name" value="30S ribosomal protein S17"/>
    <property type="match status" value="1"/>
</dbReference>
<dbReference type="Gene3D" id="2.40.50.140">
    <property type="entry name" value="Nucleic acid-binding proteins"/>
    <property type="match status" value="1"/>
</dbReference>
<dbReference type="HAMAP" id="MF_01345_B">
    <property type="entry name" value="Ribosomal_uS17_B"/>
    <property type="match status" value="1"/>
</dbReference>
<dbReference type="InterPro" id="IPR012340">
    <property type="entry name" value="NA-bd_OB-fold"/>
</dbReference>
<dbReference type="InterPro" id="IPR000266">
    <property type="entry name" value="Ribosomal_uS17"/>
</dbReference>
<dbReference type="InterPro" id="IPR019984">
    <property type="entry name" value="Ribosomal_uS17_bact/chlr"/>
</dbReference>
<dbReference type="InterPro" id="IPR019979">
    <property type="entry name" value="Ribosomal_uS17_CS"/>
</dbReference>
<dbReference type="NCBIfam" id="NF004123">
    <property type="entry name" value="PRK05610.1"/>
    <property type="match status" value="1"/>
</dbReference>
<dbReference type="NCBIfam" id="TIGR03635">
    <property type="entry name" value="uS17_bact"/>
    <property type="match status" value="1"/>
</dbReference>
<dbReference type="PANTHER" id="PTHR10744">
    <property type="entry name" value="40S RIBOSOMAL PROTEIN S11 FAMILY MEMBER"/>
    <property type="match status" value="1"/>
</dbReference>
<dbReference type="PANTHER" id="PTHR10744:SF1">
    <property type="entry name" value="SMALL RIBOSOMAL SUBUNIT PROTEIN US17M"/>
    <property type="match status" value="1"/>
</dbReference>
<dbReference type="Pfam" id="PF00366">
    <property type="entry name" value="Ribosomal_S17"/>
    <property type="match status" value="1"/>
</dbReference>
<dbReference type="PRINTS" id="PR00973">
    <property type="entry name" value="RIBOSOMALS17"/>
</dbReference>
<dbReference type="SUPFAM" id="SSF50249">
    <property type="entry name" value="Nucleic acid-binding proteins"/>
    <property type="match status" value="1"/>
</dbReference>
<dbReference type="PROSITE" id="PS00056">
    <property type="entry name" value="RIBOSOMAL_S17"/>
    <property type="match status" value="1"/>
</dbReference>
<evidence type="ECO:0000255" key="1">
    <source>
        <dbReference type="HAMAP-Rule" id="MF_01345"/>
    </source>
</evidence>
<evidence type="ECO:0000305" key="2"/>